<proteinExistence type="inferred from homology"/>
<name>ALAT_SCHPO</name>
<keyword id="KW-0032">Aminotransferase</keyword>
<keyword id="KW-0963">Cytoplasm</keyword>
<keyword id="KW-0496">Mitochondrion</keyword>
<keyword id="KW-0663">Pyridoxal phosphate</keyword>
<keyword id="KW-1185">Reference proteome</keyword>
<keyword id="KW-0808">Transferase</keyword>
<organism>
    <name type="scientific">Schizosaccharomyces pombe (strain 972 / ATCC 24843)</name>
    <name type="common">Fission yeast</name>
    <dbReference type="NCBI Taxonomy" id="284812"/>
    <lineage>
        <taxon>Eukaryota</taxon>
        <taxon>Fungi</taxon>
        <taxon>Dikarya</taxon>
        <taxon>Ascomycota</taxon>
        <taxon>Taphrinomycotina</taxon>
        <taxon>Schizosaccharomycetes</taxon>
        <taxon>Schizosaccharomycetales</taxon>
        <taxon>Schizosaccharomycetaceae</taxon>
        <taxon>Schizosaccharomyces</taxon>
    </lineage>
</organism>
<comment type="function">
    <text evidence="1">Alanine aminotransferase involved in both alanine biosynthesis and utilization.</text>
</comment>
<comment type="catalytic activity">
    <reaction evidence="1">
        <text>L-alanine + 2-oxoglutarate = pyruvate + L-glutamate</text>
        <dbReference type="Rhea" id="RHEA:19453"/>
        <dbReference type="ChEBI" id="CHEBI:15361"/>
        <dbReference type="ChEBI" id="CHEBI:16810"/>
        <dbReference type="ChEBI" id="CHEBI:29985"/>
        <dbReference type="ChEBI" id="CHEBI:57972"/>
        <dbReference type="EC" id="2.6.1.2"/>
    </reaction>
    <physiologicalReaction direction="left-to-right" evidence="1">
        <dbReference type="Rhea" id="RHEA:19454"/>
    </physiologicalReaction>
    <physiologicalReaction direction="right-to-left" evidence="1">
        <dbReference type="Rhea" id="RHEA:19455"/>
    </physiologicalReaction>
</comment>
<comment type="cofactor">
    <cofactor evidence="1">
        <name>pyridoxal 5'-phosphate</name>
        <dbReference type="ChEBI" id="CHEBI:597326"/>
    </cofactor>
</comment>
<comment type="pathway">
    <text evidence="1">Amino-acid degradation; L-alanine degradation via transaminase pathway; pyruvate from L-alanine: step 1/1.</text>
</comment>
<comment type="subunit">
    <text evidence="1">Homodimer.</text>
</comment>
<comment type="subcellular location">
    <subcellularLocation>
        <location evidence="3">Cytoplasm</location>
    </subcellularLocation>
    <subcellularLocation>
        <location evidence="1">Mitochondrion</location>
    </subcellularLocation>
</comment>
<comment type="similarity">
    <text evidence="3">Belongs to the class-I pyridoxal-phosphate-dependent aminotransferase family. Alanine aminotransferase subfamily.</text>
</comment>
<dbReference type="EC" id="2.6.1.2"/>
<dbReference type="EMBL" id="CU329671">
    <property type="protein sequence ID" value="CAK9839475.1"/>
    <property type="molecule type" value="Genomic_DNA"/>
</dbReference>
<dbReference type="PIR" id="T37975">
    <property type="entry name" value="T37975"/>
</dbReference>
<dbReference type="RefSeq" id="NP_595176.1">
    <property type="nucleotide sequence ID" value="NM_001021084.2"/>
</dbReference>
<dbReference type="SMR" id="Q10334"/>
<dbReference type="BioGRID" id="277407">
    <property type="interactions" value="15"/>
</dbReference>
<dbReference type="FunCoup" id="Q10334">
    <property type="interactions" value="222"/>
</dbReference>
<dbReference type="STRING" id="284812.Q10334"/>
<dbReference type="PaxDb" id="4896-SPBC582.08.1"/>
<dbReference type="EnsemblFungi" id="SPBC582.08.1">
    <property type="protein sequence ID" value="SPBC582.08.1:pep"/>
    <property type="gene ID" value="SPBC582.08"/>
</dbReference>
<dbReference type="GeneID" id="2540891"/>
<dbReference type="KEGG" id="spo:2540891"/>
<dbReference type="PomBase" id="SPBC582.08">
    <property type="gene designation" value="alt1"/>
</dbReference>
<dbReference type="VEuPathDB" id="FungiDB:SPBC582.08"/>
<dbReference type="eggNOG" id="KOG0258">
    <property type="taxonomic scope" value="Eukaryota"/>
</dbReference>
<dbReference type="HOGENOM" id="CLU_014254_3_0_1"/>
<dbReference type="InParanoid" id="Q10334"/>
<dbReference type="OMA" id="FGFECPP"/>
<dbReference type="PhylomeDB" id="Q10334"/>
<dbReference type="UniPathway" id="UPA00528">
    <property type="reaction ID" value="UER00586"/>
</dbReference>
<dbReference type="PRO" id="PR:Q10334"/>
<dbReference type="Proteomes" id="UP000002485">
    <property type="component" value="Chromosome II"/>
</dbReference>
<dbReference type="GO" id="GO:0005739">
    <property type="term" value="C:mitochondrion"/>
    <property type="evidence" value="ECO:0000250"/>
    <property type="project" value="PomBase"/>
</dbReference>
<dbReference type="GO" id="GO:0005634">
    <property type="term" value="C:nucleus"/>
    <property type="evidence" value="ECO:0000250"/>
    <property type="project" value="PomBase"/>
</dbReference>
<dbReference type="GO" id="GO:0004021">
    <property type="term" value="F:L-alanine:2-oxoglutarate aminotransferase activity"/>
    <property type="evidence" value="ECO:0000250"/>
    <property type="project" value="PomBase"/>
</dbReference>
<dbReference type="GO" id="GO:0030170">
    <property type="term" value="F:pyridoxal phosphate binding"/>
    <property type="evidence" value="ECO:0007669"/>
    <property type="project" value="InterPro"/>
</dbReference>
<dbReference type="GO" id="GO:0008483">
    <property type="term" value="F:transaminase activity"/>
    <property type="evidence" value="ECO:0007669"/>
    <property type="project" value="UniProtKB-KW"/>
</dbReference>
<dbReference type="GO" id="GO:0009058">
    <property type="term" value="P:biosynthetic process"/>
    <property type="evidence" value="ECO:0007669"/>
    <property type="project" value="InterPro"/>
</dbReference>
<dbReference type="GO" id="GO:0042853">
    <property type="term" value="P:L-alanine catabolic process"/>
    <property type="evidence" value="ECO:0007669"/>
    <property type="project" value="UniProtKB-UniPathway"/>
</dbReference>
<dbReference type="GO" id="GO:0097054">
    <property type="term" value="P:L-glutamate biosynthetic process"/>
    <property type="evidence" value="ECO:0000305"/>
    <property type="project" value="PomBase"/>
</dbReference>
<dbReference type="CDD" id="cd00609">
    <property type="entry name" value="AAT_like"/>
    <property type="match status" value="1"/>
</dbReference>
<dbReference type="FunFam" id="1.10.287.1970:FF:000001">
    <property type="entry name" value="Alanine aminotransferase 2"/>
    <property type="match status" value="1"/>
</dbReference>
<dbReference type="FunFam" id="3.40.640.10:FF:000104">
    <property type="entry name" value="Alanine aminotransferase, putative"/>
    <property type="match status" value="1"/>
</dbReference>
<dbReference type="Gene3D" id="1.10.287.1970">
    <property type="match status" value="1"/>
</dbReference>
<dbReference type="Gene3D" id="3.90.1150.10">
    <property type="entry name" value="Aspartate Aminotransferase, domain 1"/>
    <property type="match status" value="1"/>
</dbReference>
<dbReference type="Gene3D" id="3.40.640.10">
    <property type="entry name" value="Type I PLP-dependent aspartate aminotransferase-like (Major domain)"/>
    <property type="match status" value="1"/>
</dbReference>
<dbReference type="InterPro" id="IPR045088">
    <property type="entry name" value="ALAT1/2-like"/>
</dbReference>
<dbReference type="InterPro" id="IPR004839">
    <property type="entry name" value="Aminotransferase_I/II_large"/>
</dbReference>
<dbReference type="InterPro" id="IPR015424">
    <property type="entry name" value="PyrdxlP-dep_Trfase"/>
</dbReference>
<dbReference type="InterPro" id="IPR015421">
    <property type="entry name" value="PyrdxlP-dep_Trfase_major"/>
</dbReference>
<dbReference type="InterPro" id="IPR015422">
    <property type="entry name" value="PyrdxlP-dep_Trfase_small"/>
</dbReference>
<dbReference type="PANTHER" id="PTHR11751">
    <property type="entry name" value="ALANINE AMINOTRANSFERASE"/>
    <property type="match status" value="1"/>
</dbReference>
<dbReference type="PANTHER" id="PTHR11751:SF29">
    <property type="entry name" value="ALANINE TRANSAMINASE"/>
    <property type="match status" value="1"/>
</dbReference>
<dbReference type="Pfam" id="PF00155">
    <property type="entry name" value="Aminotran_1_2"/>
    <property type="match status" value="1"/>
</dbReference>
<dbReference type="SUPFAM" id="SSF53383">
    <property type="entry name" value="PLP-dependent transferases"/>
    <property type="match status" value="1"/>
</dbReference>
<evidence type="ECO:0000250" key="1">
    <source>
        <dbReference type="UniProtKB" id="P52893"/>
    </source>
</evidence>
<evidence type="ECO:0000250" key="2">
    <source>
        <dbReference type="UniProtKB" id="Q8TD30"/>
    </source>
</evidence>
<evidence type="ECO:0000305" key="3"/>
<evidence type="ECO:0000312" key="4">
    <source>
        <dbReference type="PomBase" id="SPBC582.08"/>
    </source>
</evidence>
<gene>
    <name type="primary">alt1</name>
    <name evidence="4" type="ORF">SPBC582.08</name>
</gene>
<reference key="1">
    <citation type="journal article" date="2002" name="Nature">
        <title>The genome sequence of Schizosaccharomyces pombe.</title>
        <authorList>
            <person name="Wood V."/>
            <person name="Gwilliam R."/>
            <person name="Rajandream M.A."/>
            <person name="Lyne M.H."/>
            <person name="Lyne R."/>
            <person name="Stewart A."/>
            <person name="Sgouros J.G."/>
            <person name="Peat N."/>
            <person name="Hayles J."/>
            <person name="Baker S.G."/>
            <person name="Basham D."/>
            <person name="Bowman S."/>
            <person name="Brooks K."/>
            <person name="Brown D."/>
            <person name="Brown S."/>
            <person name="Chillingworth T."/>
            <person name="Churcher C.M."/>
            <person name="Collins M."/>
            <person name="Connor R."/>
            <person name="Cronin A."/>
            <person name="Davis P."/>
            <person name="Feltwell T."/>
            <person name="Fraser A."/>
            <person name="Gentles S."/>
            <person name="Goble A."/>
            <person name="Hamlin N."/>
            <person name="Harris D.E."/>
            <person name="Hidalgo J."/>
            <person name="Hodgson G."/>
            <person name="Holroyd S."/>
            <person name="Hornsby T."/>
            <person name="Howarth S."/>
            <person name="Huckle E.J."/>
            <person name="Hunt S."/>
            <person name="Jagels K."/>
            <person name="James K.D."/>
            <person name="Jones L."/>
            <person name="Jones M."/>
            <person name="Leather S."/>
            <person name="McDonald S."/>
            <person name="McLean J."/>
            <person name="Mooney P."/>
            <person name="Moule S."/>
            <person name="Mungall K.L."/>
            <person name="Murphy L.D."/>
            <person name="Niblett D."/>
            <person name="Odell C."/>
            <person name="Oliver K."/>
            <person name="O'Neil S."/>
            <person name="Pearson D."/>
            <person name="Quail M.A."/>
            <person name="Rabbinowitsch E."/>
            <person name="Rutherford K.M."/>
            <person name="Rutter S."/>
            <person name="Saunders D."/>
            <person name="Seeger K."/>
            <person name="Sharp S."/>
            <person name="Skelton J."/>
            <person name="Simmonds M.N."/>
            <person name="Squares R."/>
            <person name="Squares S."/>
            <person name="Stevens K."/>
            <person name="Taylor K."/>
            <person name="Taylor R.G."/>
            <person name="Tivey A."/>
            <person name="Walsh S.V."/>
            <person name="Warren T."/>
            <person name="Whitehead S."/>
            <person name="Woodward J.R."/>
            <person name="Volckaert G."/>
            <person name="Aert R."/>
            <person name="Robben J."/>
            <person name="Grymonprez B."/>
            <person name="Weltjens I."/>
            <person name="Vanstreels E."/>
            <person name="Rieger M."/>
            <person name="Schaefer M."/>
            <person name="Mueller-Auer S."/>
            <person name="Gabel C."/>
            <person name="Fuchs M."/>
            <person name="Duesterhoeft A."/>
            <person name="Fritzc C."/>
            <person name="Holzer E."/>
            <person name="Moestl D."/>
            <person name="Hilbert H."/>
            <person name="Borzym K."/>
            <person name="Langer I."/>
            <person name="Beck A."/>
            <person name="Lehrach H."/>
            <person name="Reinhardt R."/>
            <person name="Pohl T.M."/>
            <person name="Eger P."/>
            <person name="Zimmermann W."/>
            <person name="Wedler H."/>
            <person name="Wambutt R."/>
            <person name="Purnelle B."/>
            <person name="Goffeau A."/>
            <person name="Cadieu E."/>
            <person name="Dreano S."/>
            <person name="Gloux S."/>
            <person name="Lelaure V."/>
            <person name="Mottier S."/>
            <person name="Galibert F."/>
            <person name="Aves S.J."/>
            <person name="Xiang Z."/>
            <person name="Hunt C."/>
            <person name="Moore K."/>
            <person name="Hurst S.M."/>
            <person name="Lucas M."/>
            <person name="Rochet M."/>
            <person name="Gaillardin C."/>
            <person name="Tallada V.A."/>
            <person name="Garzon A."/>
            <person name="Thode G."/>
            <person name="Daga R.R."/>
            <person name="Cruzado L."/>
            <person name="Jimenez J."/>
            <person name="Sanchez M."/>
            <person name="del Rey F."/>
            <person name="Benito J."/>
            <person name="Dominguez A."/>
            <person name="Revuelta J.L."/>
            <person name="Moreno S."/>
            <person name="Armstrong J."/>
            <person name="Forsburg S.L."/>
            <person name="Cerutti L."/>
            <person name="Lowe T."/>
            <person name="McCombie W.R."/>
            <person name="Paulsen I."/>
            <person name="Potashkin J."/>
            <person name="Shpakovski G.V."/>
            <person name="Ussery D."/>
            <person name="Barrell B.G."/>
            <person name="Nurse P."/>
        </authorList>
    </citation>
    <scope>NUCLEOTIDE SEQUENCE [LARGE SCALE GENOMIC DNA]</scope>
    <source>
        <strain>972 / ATCC 24843</strain>
    </source>
</reference>
<sequence length="490" mass="54844">MSDLDGFCQNAFSDLNSLNQQVFKANYAVRGALAILADEIQDDLLENPSSYPFSEIVYANIGNPQQMGQSPITFVRQVLSLCQYPTLLDHAEEKWFQNLFPTDVVQRSKMLLKESGSLGAYSASQGIPLVRRHVADFIRARDGFDCEPSDIYLTSGASHAARLIMTLIIARPTDGVMVPAPQYPLYGAQIDLMSGSMVSYSLSEENNWDIDFDQFKKSFDEASKKGINVRLCVVINPGNPTGACISENSMEKVLRFAKAKGIVLLADEVYQNNIYQNKFHSFRRKLGELREKEPDNHWDQVSLISVNSVSKGQFGECGQRGGYLDVVNIPEPAKDQILKLATIDICPPVAGQLLVDMLVNPPKPGDPSYDLFIKEVDEIHEALRLQCRQLYEGTKRMKRVSCLEPHGAMYLHPSVSLPEKLITTAKAQKIQPDEFYAIELLKRSGICVVPGSGFGQPEGDYHIRITFLAKGTEYIERFVKAHNEIMDLYE</sequence>
<protein>
    <recommendedName>
        <fullName>Putative alanine aminotransferase</fullName>
        <ecNumber>2.6.1.2</ecNumber>
    </recommendedName>
    <alternativeName>
        <fullName>Glutamate pyruvate transaminase</fullName>
        <shortName>GPT</shortName>
    </alternativeName>
    <alternativeName>
        <fullName>Glutamic--alanine transaminase</fullName>
    </alternativeName>
    <alternativeName>
        <fullName>Glutamic--pyruvic transaminase</fullName>
    </alternativeName>
</protein>
<accession>Q10334</accession>
<accession>A0AAN2HEJ3</accession>
<feature type="chain" id="PRO_0000123938" description="Putative alanine aminotransferase">
    <location>
        <begin position="1"/>
        <end position="490"/>
    </location>
</feature>
<feature type="binding site" evidence="2">
    <location>
        <position position="157"/>
    </location>
    <ligand>
        <name>pyridoxal 5'-phosphate</name>
        <dbReference type="ChEBI" id="CHEBI:597326"/>
    </ligand>
</feature>
<feature type="binding site" evidence="2">
    <location>
        <position position="158"/>
    </location>
    <ligand>
        <name>pyridoxal 5'-phosphate</name>
        <dbReference type="ChEBI" id="CHEBI:597326"/>
    </ligand>
</feature>
<feature type="binding site" evidence="2">
    <location>
        <position position="183"/>
    </location>
    <ligand>
        <name>pyridoxal 5'-phosphate</name>
        <dbReference type="ChEBI" id="CHEBI:597326"/>
    </ligand>
</feature>
<feature type="binding site" evidence="2">
    <location>
        <position position="239"/>
    </location>
    <ligand>
        <name>pyridoxal 5'-phosphate</name>
        <dbReference type="ChEBI" id="CHEBI:597326"/>
    </ligand>
</feature>
<feature type="binding site" evidence="2">
    <location>
        <position position="308"/>
    </location>
    <ligand>
        <name>pyridoxal 5'-phosphate</name>
        <dbReference type="ChEBI" id="CHEBI:597326"/>
    </ligand>
</feature>
<feature type="binding site" evidence="2">
    <location>
        <position position="320"/>
    </location>
    <ligand>
        <name>pyridoxal 5'-phosphate</name>
        <dbReference type="ChEBI" id="CHEBI:597326"/>
    </ligand>
</feature>
<feature type="modified residue" description="N6-(pyridoxal phosphate)lysine" evidence="2">
    <location>
        <position position="311"/>
    </location>
</feature>